<accession>P44900</accession>
<gene>
    <name type="ordered locus">HI_0845</name>
</gene>
<keyword id="KW-1185">Reference proteome</keyword>
<organism>
    <name type="scientific">Haemophilus influenzae (strain ATCC 51907 / DSM 11121 / KW20 / Rd)</name>
    <dbReference type="NCBI Taxonomy" id="71421"/>
    <lineage>
        <taxon>Bacteria</taxon>
        <taxon>Pseudomonadati</taxon>
        <taxon>Pseudomonadota</taxon>
        <taxon>Gammaproteobacteria</taxon>
        <taxon>Pasteurellales</taxon>
        <taxon>Pasteurellaceae</taxon>
        <taxon>Haemophilus</taxon>
    </lineage>
</organism>
<reference key="1">
    <citation type="journal article" date="1992" name="Proc. Natl. Acad. Sci. U.S.A.">
        <title>A periplasmic protein disulfide oxidoreductase is required for transformation of Haemophilus influenzae Rd.</title>
        <authorList>
            <person name="Tomb J.-F."/>
        </authorList>
    </citation>
    <scope>NUCLEOTIDE SEQUENCE [GENOMIC DNA]</scope>
    <source>
        <strain>ATCC 51907 / DSM 11121 / KW20 / Rd</strain>
    </source>
</reference>
<reference key="2">
    <citation type="journal article" date="1995" name="Science">
        <title>Whole-genome random sequencing and assembly of Haemophilus influenzae Rd.</title>
        <authorList>
            <person name="Fleischmann R.D."/>
            <person name="Adams M.D."/>
            <person name="White O."/>
            <person name="Clayton R.A."/>
            <person name="Kirkness E.F."/>
            <person name="Kerlavage A.R."/>
            <person name="Bult C.J."/>
            <person name="Tomb J.-F."/>
            <person name="Dougherty B.A."/>
            <person name="Merrick J.M."/>
            <person name="McKenney K."/>
            <person name="Sutton G.G."/>
            <person name="FitzHugh W."/>
            <person name="Fields C.A."/>
            <person name="Gocayne J.D."/>
            <person name="Scott J.D."/>
            <person name="Shirley R."/>
            <person name="Liu L.-I."/>
            <person name="Glodek A."/>
            <person name="Kelley J.M."/>
            <person name="Weidman J.F."/>
            <person name="Phillips C.A."/>
            <person name="Spriggs T."/>
            <person name="Hedblom E."/>
            <person name="Cotton M.D."/>
            <person name="Utterback T.R."/>
            <person name="Hanna M.C."/>
            <person name="Nguyen D.T."/>
            <person name="Saudek D.M."/>
            <person name="Brandon R.C."/>
            <person name="Fine L.D."/>
            <person name="Fritchman J.L."/>
            <person name="Fuhrmann J.L."/>
            <person name="Geoghagen N.S.M."/>
            <person name="Gnehm C.L."/>
            <person name="McDonald L.A."/>
            <person name="Small K.V."/>
            <person name="Fraser C.M."/>
            <person name="Smith H.O."/>
            <person name="Venter J.C."/>
        </authorList>
    </citation>
    <scope>NUCLEOTIDE SEQUENCE [LARGE SCALE GENOMIC DNA]</scope>
    <source>
        <strain>ATCC 51907 / DSM 11121 / KW20 / Rd</strain>
    </source>
</reference>
<dbReference type="EMBL" id="M94205">
    <property type="protein sequence ID" value="AAA24955.1"/>
    <property type="molecule type" value="Genomic_DNA"/>
</dbReference>
<dbReference type="EMBL" id="L42023">
    <property type="protein sequence ID" value="AAC22502.1"/>
    <property type="molecule type" value="Genomic_DNA"/>
</dbReference>
<dbReference type="PIR" id="G64159">
    <property type="entry name" value="A46411"/>
</dbReference>
<dbReference type="RefSeq" id="NP_439005.1">
    <property type="nucleotide sequence ID" value="NC_000907.1"/>
</dbReference>
<dbReference type="SMR" id="P44900"/>
<dbReference type="STRING" id="71421.HI_0845"/>
<dbReference type="EnsemblBacteria" id="AAC22502">
    <property type="protein sequence ID" value="AAC22502"/>
    <property type="gene ID" value="HI_0845"/>
</dbReference>
<dbReference type="KEGG" id="hin:HI_0845"/>
<dbReference type="PATRIC" id="fig|71421.8.peg.886"/>
<dbReference type="eggNOG" id="COG3084">
    <property type="taxonomic scope" value="Bacteria"/>
</dbReference>
<dbReference type="HOGENOM" id="CLU_170339_0_0_6"/>
<dbReference type="OrthoDB" id="6197074at2"/>
<dbReference type="PhylomeDB" id="P44900"/>
<dbReference type="BioCyc" id="HINF71421:G1GJ1-885-MONOMER"/>
<dbReference type="Proteomes" id="UP000000579">
    <property type="component" value="Chromosome"/>
</dbReference>
<dbReference type="Gene3D" id="1.10.1580.20">
    <property type="entry name" value="Protein of unknown function DUF1040"/>
    <property type="match status" value="1"/>
</dbReference>
<dbReference type="InterPro" id="IPR009383">
    <property type="entry name" value="DUF1040"/>
</dbReference>
<dbReference type="InterPro" id="IPR038134">
    <property type="entry name" value="YihD_sf"/>
</dbReference>
<dbReference type="Pfam" id="PF06288">
    <property type="entry name" value="DUF1040"/>
    <property type="match status" value="1"/>
</dbReference>
<feature type="chain" id="PRO_0000169673" description="Uncharacterized protein HI_0845">
    <location>
        <begin position="1"/>
        <end position="88"/>
    </location>
</feature>
<name>Y845_HAEIN</name>
<comment type="similarity">
    <text evidence="1">To E.coli YihD.</text>
</comment>
<evidence type="ECO:0000305" key="1"/>
<protein>
    <recommendedName>
        <fullName>Uncharacterized protein HI_0845</fullName>
    </recommendedName>
    <alternativeName>
        <fullName>ORF1</fullName>
    </alternativeName>
</protein>
<sequence>MKCKRLNEVLELLQSYWSKDSDLSLMEILQKIANESGFQKPLNELTDEVIIYQLKMDGTDKYEPIPGLKKDYEEDFKTALLRARGIIK</sequence>
<proteinExistence type="predicted"/>